<comment type="function">
    <text evidence="1">Activates KDO (a required 8-carbon sugar) for incorporation into bacterial lipopolysaccharide in Gram-negative bacteria.</text>
</comment>
<comment type="catalytic activity">
    <reaction evidence="1">
        <text>3-deoxy-alpha-D-manno-oct-2-ulosonate + CTP = CMP-3-deoxy-beta-D-manno-octulosonate + diphosphate</text>
        <dbReference type="Rhea" id="RHEA:23448"/>
        <dbReference type="ChEBI" id="CHEBI:33019"/>
        <dbReference type="ChEBI" id="CHEBI:37563"/>
        <dbReference type="ChEBI" id="CHEBI:85986"/>
        <dbReference type="ChEBI" id="CHEBI:85987"/>
        <dbReference type="EC" id="2.7.7.38"/>
    </reaction>
</comment>
<comment type="pathway">
    <text evidence="1">Nucleotide-sugar biosynthesis; CMP-3-deoxy-D-manno-octulosonate biosynthesis; CMP-3-deoxy-D-manno-octulosonate from 3-deoxy-D-manno-octulosonate and CTP: step 1/1.</text>
</comment>
<comment type="pathway">
    <text evidence="1">Bacterial outer membrane biogenesis; lipopolysaccharide biosynthesis.</text>
</comment>
<comment type="subcellular location">
    <subcellularLocation>
        <location evidence="1">Cytoplasm</location>
    </subcellularLocation>
</comment>
<comment type="similarity">
    <text evidence="1">Belongs to the KdsB family.</text>
</comment>
<keyword id="KW-0963">Cytoplasm</keyword>
<keyword id="KW-0448">Lipopolysaccharide biosynthesis</keyword>
<keyword id="KW-0548">Nucleotidyltransferase</keyword>
<keyword id="KW-0808">Transferase</keyword>
<evidence type="ECO:0000255" key="1">
    <source>
        <dbReference type="HAMAP-Rule" id="MF_00057"/>
    </source>
</evidence>
<protein>
    <recommendedName>
        <fullName evidence="1">3-deoxy-manno-octulosonate cytidylyltransferase</fullName>
        <ecNumber evidence="1">2.7.7.38</ecNumber>
    </recommendedName>
    <alternativeName>
        <fullName evidence="1">CMP-2-keto-3-deoxyoctulosonic acid synthase</fullName>
        <shortName evidence="1">CKS</shortName>
        <shortName evidence="1">CMP-KDO synthase</shortName>
    </alternativeName>
</protein>
<gene>
    <name evidence="1" type="primary">kdsB</name>
    <name type="ordered locus">Cag_0320</name>
</gene>
<name>KDSB_CHLCH</name>
<feature type="chain" id="PRO_1000116884" description="3-deoxy-manno-octulosonate cytidylyltransferase">
    <location>
        <begin position="1"/>
        <end position="248"/>
    </location>
</feature>
<sequence>MNAIIIIPARLGSTRLPEKMLADIEGEPLIVRTWRQAMQCCRASRVVVATDSVKIAEVLTTYGAEVVMTSPEARCGSERIAEAARQFACDVVVNLQGDEPLISHETIDLALEPFFSPNPPDCSTLVFPLQPDDWAQLHDPNQVKVVLNREGYALYFSRSPIPFQRNQLTSTQCYRHVGLYAFKAEVLQCFAALPPTMLEEAESLEQLRLLEHGYRIRCMVTHDDQPGVNTAEDLELVRTLFKQRHQEA</sequence>
<proteinExistence type="inferred from homology"/>
<dbReference type="EC" id="2.7.7.38" evidence="1"/>
<dbReference type="EMBL" id="CP000108">
    <property type="protein sequence ID" value="ABB27593.1"/>
    <property type="molecule type" value="Genomic_DNA"/>
</dbReference>
<dbReference type="SMR" id="Q3ATT2"/>
<dbReference type="STRING" id="340177.Cag_0320"/>
<dbReference type="KEGG" id="cch:Cag_0320"/>
<dbReference type="eggNOG" id="COG1212">
    <property type="taxonomic scope" value="Bacteria"/>
</dbReference>
<dbReference type="HOGENOM" id="CLU_065038_0_1_10"/>
<dbReference type="OrthoDB" id="9815559at2"/>
<dbReference type="UniPathway" id="UPA00030"/>
<dbReference type="UniPathway" id="UPA00358">
    <property type="reaction ID" value="UER00476"/>
</dbReference>
<dbReference type="GO" id="GO:0005829">
    <property type="term" value="C:cytosol"/>
    <property type="evidence" value="ECO:0007669"/>
    <property type="project" value="TreeGrafter"/>
</dbReference>
<dbReference type="GO" id="GO:0008690">
    <property type="term" value="F:3-deoxy-manno-octulosonate cytidylyltransferase activity"/>
    <property type="evidence" value="ECO:0007669"/>
    <property type="project" value="UniProtKB-UniRule"/>
</dbReference>
<dbReference type="GO" id="GO:0033468">
    <property type="term" value="P:CMP-keto-3-deoxy-D-manno-octulosonic acid biosynthetic process"/>
    <property type="evidence" value="ECO:0007669"/>
    <property type="project" value="UniProtKB-UniRule"/>
</dbReference>
<dbReference type="GO" id="GO:0009103">
    <property type="term" value="P:lipopolysaccharide biosynthetic process"/>
    <property type="evidence" value="ECO:0007669"/>
    <property type="project" value="UniProtKB-UniRule"/>
</dbReference>
<dbReference type="CDD" id="cd02517">
    <property type="entry name" value="CMP-KDO-Synthetase"/>
    <property type="match status" value="1"/>
</dbReference>
<dbReference type="Gene3D" id="3.90.550.10">
    <property type="entry name" value="Spore Coat Polysaccharide Biosynthesis Protein SpsA, Chain A"/>
    <property type="match status" value="1"/>
</dbReference>
<dbReference type="HAMAP" id="MF_00057">
    <property type="entry name" value="KdsB"/>
    <property type="match status" value="1"/>
</dbReference>
<dbReference type="InterPro" id="IPR003329">
    <property type="entry name" value="Cytidylyl_trans"/>
</dbReference>
<dbReference type="InterPro" id="IPR004528">
    <property type="entry name" value="KdsB"/>
</dbReference>
<dbReference type="InterPro" id="IPR029044">
    <property type="entry name" value="Nucleotide-diphossugar_trans"/>
</dbReference>
<dbReference type="NCBIfam" id="TIGR00466">
    <property type="entry name" value="kdsB"/>
    <property type="match status" value="1"/>
</dbReference>
<dbReference type="NCBIfam" id="NF003950">
    <property type="entry name" value="PRK05450.1-3"/>
    <property type="match status" value="1"/>
</dbReference>
<dbReference type="NCBIfam" id="NF003952">
    <property type="entry name" value="PRK05450.1-5"/>
    <property type="match status" value="1"/>
</dbReference>
<dbReference type="NCBIfam" id="NF009905">
    <property type="entry name" value="PRK13368.1"/>
    <property type="match status" value="1"/>
</dbReference>
<dbReference type="PANTHER" id="PTHR42866">
    <property type="entry name" value="3-DEOXY-MANNO-OCTULOSONATE CYTIDYLYLTRANSFERASE"/>
    <property type="match status" value="1"/>
</dbReference>
<dbReference type="PANTHER" id="PTHR42866:SF2">
    <property type="entry name" value="3-DEOXY-MANNO-OCTULOSONATE CYTIDYLYLTRANSFERASE, MITOCHONDRIAL"/>
    <property type="match status" value="1"/>
</dbReference>
<dbReference type="Pfam" id="PF02348">
    <property type="entry name" value="CTP_transf_3"/>
    <property type="match status" value="1"/>
</dbReference>
<dbReference type="SUPFAM" id="SSF53448">
    <property type="entry name" value="Nucleotide-diphospho-sugar transferases"/>
    <property type="match status" value="1"/>
</dbReference>
<accession>Q3ATT2</accession>
<reference key="1">
    <citation type="submission" date="2005-08" db="EMBL/GenBank/DDBJ databases">
        <title>Complete sequence of Chlorobium chlorochromatii CaD3.</title>
        <authorList>
            <consortium name="US DOE Joint Genome Institute"/>
            <person name="Copeland A."/>
            <person name="Lucas S."/>
            <person name="Lapidus A."/>
            <person name="Barry K."/>
            <person name="Detter J.C."/>
            <person name="Glavina T."/>
            <person name="Hammon N."/>
            <person name="Israni S."/>
            <person name="Pitluck S."/>
            <person name="Bryant D."/>
            <person name="Schmutz J."/>
            <person name="Larimer F."/>
            <person name="Land M."/>
            <person name="Kyrpides N."/>
            <person name="Ivanova N."/>
            <person name="Richardson P."/>
        </authorList>
    </citation>
    <scope>NUCLEOTIDE SEQUENCE [LARGE SCALE GENOMIC DNA]</scope>
    <source>
        <strain>CaD3</strain>
    </source>
</reference>
<organism>
    <name type="scientific">Chlorobium chlorochromatii (strain CaD3)</name>
    <dbReference type="NCBI Taxonomy" id="340177"/>
    <lineage>
        <taxon>Bacteria</taxon>
        <taxon>Pseudomonadati</taxon>
        <taxon>Chlorobiota</taxon>
        <taxon>Chlorobiia</taxon>
        <taxon>Chlorobiales</taxon>
        <taxon>Chlorobiaceae</taxon>
        <taxon>Chlorobium/Pelodictyon group</taxon>
        <taxon>Chlorobium</taxon>
    </lineage>
</organism>